<evidence type="ECO:0000255" key="1">
    <source>
        <dbReference type="HAMAP-Rule" id="MF_01322"/>
    </source>
</evidence>
<keyword id="KW-0240">DNA-directed RNA polymerase</keyword>
<keyword id="KW-0460">Magnesium</keyword>
<keyword id="KW-0479">Metal-binding</keyword>
<keyword id="KW-0548">Nucleotidyltransferase</keyword>
<keyword id="KW-0804">Transcription</keyword>
<keyword id="KW-0808">Transferase</keyword>
<keyword id="KW-0862">Zinc</keyword>
<name>RPOC_CLOP1</name>
<accession>Q0TMN9</accession>
<accession>Q93R87</accession>
<reference key="1">
    <citation type="submission" date="2001-02" db="EMBL/GenBank/DDBJ databases">
        <title>Clostridium perfringens RNA polymerase genes.</title>
        <authorList>
            <person name="Katayama S."/>
        </authorList>
    </citation>
    <scope>NUCLEOTIDE SEQUENCE [GENOMIC DNA]</scope>
</reference>
<reference key="2">
    <citation type="journal article" date="2006" name="Genome Res.">
        <title>Skewed genomic variability in strains of the toxigenic bacterial pathogen, Clostridium perfringens.</title>
        <authorList>
            <person name="Myers G.S.A."/>
            <person name="Rasko D.A."/>
            <person name="Cheung J.K."/>
            <person name="Ravel J."/>
            <person name="Seshadri R."/>
            <person name="DeBoy R.T."/>
            <person name="Ren Q."/>
            <person name="Varga J."/>
            <person name="Awad M.M."/>
            <person name="Brinkac L.M."/>
            <person name="Daugherty S.C."/>
            <person name="Haft D.H."/>
            <person name="Dodson R.J."/>
            <person name="Madupu R."/>
            <person name="Nelson W.C."/>
            <person name="Rosovitz M.J."/>
            <person name="Sullivan S.A."/>
            <person name="Khouri H."/>
            <person name="Dimitrov G.I."/>
            <person name="Watkins K.L."/>
            <person name="Mulligan S."/>
            <person name="Benton J."/>
            <person name="Radune D."/>
            <person name="Fisher D.J."/>
            <person name="Atkins H.S."/>
            <person name="Hiscox T."/>
            <person name="Jost B.H."/>
            <person name="Billington S.J."/>
            <person name="Songer J.G."/>
            <person name="McClane B.A."/>
            <person name="Titball R.W."/>
            <person name="Rood J.I."/>
            <person name="Melville S.B."/>
            <person name="Paulsen I.T."/>
        </authorList>
    </citation>
    <scope>NUCLEOTIDE SEQUENCE [LARGE SCALE GENOMIC DNA]</scope>
    <source>
        <strain>ATCC 13124 / DSM 756 / JCM 1290 / NCIMB 6125 / NCTC 8237 / S 107 / Type A</strain>
    </source>
</reference>
<gene>
    <name evidence="1" type="primary">rpoC</name>
    <name type="ordered locus">CPF_2721</name>
</gene>
<protein>
    <recommendedName>
        <fullName evidence="1">DNA-directed RNA polymerase subunit beta'</fullName>
        <shortName evidence="1">RNAP subunit beta'</shortName>
        <ecNumber evidence="1">2.7.7.6</ecNumber>
    </recommendedName>
    <alternativeName>
        <fullName evidence="1">RNA polymerase subunit beta'</fullName>
    </alternativeName>
    <alternativeName>
        <fullName evidence="1">Transcriptase subunit beta'</fullName>
    </alternativeName>
</protein>
<proteinExistence type="inferred from homology"/>
<sequence>MFELNNFDALQIGLASPEQIREWSRGEVKKPETINYRTLKPERDGLFCERIFGPIKDWECHCGKYKRVRYKGIVCDRCGVEVTKSKVRRERMAHIELAAPVSHIWYFKGIPSRMGLILDMSPRALEKVLYFASYIVIDPKETSLLKKQLLNEKEYREACDKYGEESFVAGMGAEAIKTLLSEIDLERTAAELKEELKQSTGQKKVRIIRRLEVVESFKSSGNKPEWMVVDVIPVIPPDLRPMVQLDGGRFATSDLNDLYRRVINRNNRLKKLLDLGAPDIIVRNEKRMLQEAVDALIDNGRRGRPVTGPGNRPLKSLSDMLKGKQGRFRQNLLGKRVDYSGRSVIVVGPELKMYQCGLPKEMALELFKPFVMKKLVEDGVAHNIKSAKRMVERVMPQVWDVLEEVIADHPVLLNRAPTLHRLGIQAFQPVLVEGRAIKLHPLVCTAYNADFDGDQMAVHVPLSVEAQAEARFLMLAAGNIMKPSDGRPVCVPTQDMVLGSYYLTMDKDGAKGEGKYFASFDEVIMAYQLKEVDIHAKINVKVTKEIDGELKSGIIKTTPGFIIFNECIPQDLGFVNRENPEEMFNLEIDFLITKKSLGKIIDKCYLKHGPTKTSIMLDNIKATGYHYSSIGAVTVAASDMIVPQKKYELLKEADETVDKIEKMYRRGLISEDERYERVIEKWTETTEEVADTLMNSLDKFNPIFMMADSGARGSKSQIKQLAGMRGLMASPSGKIIELPIRASFREGLDVLEYFISTHGARKGNADTALKTADSGYLTRRLVDVSQDVIVREHDCGTQNGIYVEEIKEGSEVVEQLAERLTGRYTAEDVFHPETGELLAAKDTYMDPILAEKIADTGIQKVKIRSVFTCDSKVGVCTKCYGMNMATSYKINIGEAVGIVAAQSIGEPGTQLTMRTFHTGGVAGADITQGLPRVEELFEARKPKGLAIVSEVAGTVRIEETKKKRTVYVVTDSGEEYSYDIPFGSRLKVKDGIAIGAGDEITEGSVNPHDIMSIKGVDGAREYLLSEVQKVYRLQGVDINDKHLEVVVRQMTRKIKVTEQGDTNLLPGVMIDMFDFRAENERVESFGGEKAQGDIVLLGITKAALATDSFLSAASFQETTRVLTDAAIKGKIDPLVGLKENVIIGKLIPAGTGMMKYRSLKLNTENSNQETETIIEIEE</sequence>
<feature type="chain" id="PRO_0000273629" description="DNA-directed RNA polymerase subunit beta'">
    <location>
        <begin position="1"/>
        <end position="1178"/>
    </location>
</feature>
<feature type="binding site" evidence="1">
    <location>
        <position position="60"/>
    </location>
    <ligand>
        <name>Zn(2+)</name>
        <dbReference type="ChEBI" id="CHEBI:29105"/>
        <label>1</label>
    </ligand>
</feature>
<feature type="binding site" evidence="1">
    <location>
        <position position="62"/>
    </location>
    <ligand>
        <name>Zn(2+)</name>
        <dbReference type="ChEBI" id="CHEBI:29105"/>
        <label>1</label>
    </ligand>
</feature>
<feature type="binding site" evidence="1">
    <location>
        <position position="75"/>
    </location>
    <ligand>
        <name>Zn(2+)</name>
        <dbReference type="ChEBI" id="CHEBI:29105"/>
        <label>1</label>
    </ligand>
</feature>
<feature type="binding site" evidence="1">
    <location>
        <position position="78"/>
    </location>
    <ligand>
        <name>Zn(2+)</name>
        <dbReference type="ChEBI" id="CHEBI:29105"/>
        <label>1</label>
    </ligand>
</feature>
<feature type="binding site" evidence="1">
    <location>
        <position position="450"/>
    </location>
    <ligand>
        <name>Mg(2+)</name>
        <dbReference type="ChEBI" id="CHEBI:18420"/>
    </ligand>
</feature>
<feature type="binding site" evidence="1">
    <location>
        <position position="452"/>
    </location>
    <ligand>
        <name>Mg(2+)</name>
        <dbReference type="ChEBI" id="CHEBI:18420"/>
    </ligand>
</feature>
<feature type="binding site" evidence="1">
    <location>
        <position position="454"/>
    </location>
    <ligand>
        <name>Mg(2+)</name>
        <dbReference type="ChEBI" id="CHEBI:18420"/>
    </ligand>
</feature>
<feature type="binding site" evidence="1">
    <location>
        <position position="795"/>
    </location>
    <ligand>
        <name>Zn(2+)</name>
        <dbReference type="ChEBI" id="CHEBI:29105"/>
        <label>2</label>
    </ligand>
</feature>
<feature type="binding site" evidence="1">
    <location>
        <position position="869"/>
    </location>
    <ligand>
        <name>Zn(2+)</name>
        <dbReference type="ChEBI" id="CHEBI:29105"/>
        <label>2</label>
    </ligand>
</feature>
<feature type="binding site" evidence="1">
    <location>
        <position position="876"/>
    </location>
    <ligand>
        <name>Zn(2+)</name>
        <dbReference type="ChEBI" id="CHEBI:29105"/>
        <label>2</label>
    </ligand>
</feature>
<feature type="binding site" evidence="1">
    <location>
        <position position="879"/>
    </location>
    <ligand>
        <name>Zn(2+)</name>
        <dbReference type="ChEBI" id="CHEBI:29105"/>
        <label>2</label>
    </ligand>
</feature>
<organism>
    <name type="scientific">Clostridium perfringens (strain ATCC 13124 / DSM 756 / JCM 1290 / NCIMB 6125 / NCTC 8237 / Type A)</name>
    <dbReference type="NCBI Taxonomy" id="195103"/>
    <lineage>
        <taxon>Bacteria</taxon>
        <taxon>Bacillati</taxon>
        <taxon>Bacillota</taxon>
        <taxon>Clostridia</taxon>
        <taxon>Eubacteriales</taxon>
        <taxon>Clostridiaceae</taxon>
        <taxon>Clostridium</taxon>
    </lineage>
</organism>
<dbReference type="EC" id="2.7.7.6" evidence="1"/>
<dbReference type="EMBL" id="AB055810">
    <property type="protein sequence ID" value="BAB62885.1"/>
    <property type="molecule type" value="Genomic_DNA"/>
</dbReference>
<dbReference type="EMBL" id="CP000246">
    <property type="protein sequence ID" value="ABG83537.1"/>
    <property type="molecule type" value="Genomic_DNA"/>
</dbReference>
<dbReference type="RefSeq" id="WP_003460614.1">
    <property type="nucleotide sequence ID" value="NC_008261.1"/>
</dbReference>
<dbReference type="SMR" id="Q0TMN9"/>
<dbReference type="STRING" id="195103.CPF_2721"/>
<dbReference type="PaxDb" id="195103-CPF_2721"/>
<dbReference type="GeneID" id="93001002"/>
<dbReference type="KEGG" id="cpf:CPF_2721"/>
<dbReference type="eggNOG" id="COG0086">
    <property type="taxonomic scope" value="Bacteria"/>
</dbReference>
<dbReference type="HOGENOM" id="CLU_000524_3_1_9"/>
<dbReference type="Proteomes" id="UP000001823">
    <property type="component" value="Chromosome"/>
</dbReference>
<dbReference type="GO" id="GO:0000428">
    <property type="term" value="C:DNA-directed RNA polymerase complex"/>
    <property type="evidence" value="ECO:0007669"/>
    <property type="project" value="UniProtKB-KW"/>
</dbReference>
<dbReference type="GO" id="GO:0003677">
    <property type="term" value="F:DNA binding"/>
    <property type="evidence" value="ECO:0007669"/>
    <property type="project" value="UniProtKB-UniRule"/>
</dbReference>
<dbReference type="GO" id="GO:0003899">
    <property type="term" value="F:DNA-directed RNA polymerase activity"/>
    <property type="evidence" value="ECO:0007669"/>
    <property type="project" value="UniProtKB-UniRule"/>
</dbReference>
<dbReference type="GO" id="GO:0000287">
    <property type="term" value="F:magnesium ion binding"/>
    <property type="evidence" value="ECO:0007669"/>
    <property type="project" value="UniProtKB-UniRule"/>
</dbReference>
<dbReference type="GO" id="GO:0008270">
    <property type="term" value="F:zinc ion binding"/>
    <property type="evidence" value="ECO:0007669"/>
    <property type="project" value="UniProtKB-UniRule"/>
</dbReference>
<dbReference type="GO" id="GO:0006351">
    <property type="term" value="P:DNA-templated transcription"/>
    <property type="evidence" value="ECO:0007669"/>
    <property type="project" value="UniProtKB-UniRule"/>
</dbReference>
<dbReference type="CDD" id="cd02655">
    <property type="entry name" value="RNAP_beta'_C"/>
    <property type="match status" value="1"/>
</dbReference>
<dbReference type="CDD" id="cd01609">
    <property type="entry name" value="RNAP_beta'_N"/>
    <property type="match status" value="1"/>
</dbReference>
<dbReference type="FunFam" id="1.10.150.390:FF:000002">
    <property type="entry name" value="DNA-directed RNA polymerase subunit beta"/>
    <property type="match status" value="1"/>
</dbReference>
<dbReference type="FunFam" id="1.10.40.90:FF:000001">
    <property type="entry name" value="DNA-directed RNA polymerase subunit beta"/>
    <property type="match status" value="1"/>
</dbReference>
<dbReference type="FunFam" id="4.10.860.120:FF:000001">
    <property type="entry name" value="DNA-directed RNA polymerase subunit beta"/>
    <property type="match status" value="1"/>
</dbReference>
<dbReference type="Gene3D" id="1.10.132.30">
    <property type="match status" value="1"/>
</dbReference>
<dbReference type="Gene3D" id="1.10.150.390">
    <property type="match status" value="1"/>
</dbReference>
<dbReference type="Gene3D" id="1.10.1790.20">
    <property type="match status" value="1"/>
</dbReference>
<dbReference type="Gene3D" id="1.10.40.90">
    <property type="match status" value="1"/>
</dbReference>
<dbReference type="Gene3D" id="2.40.40.20">
    <property type="match status" value="1"/>
</dbReference>
<dbReference type="Gene3D" id="2.40.50.100">
    <property type="match status" value="1"/>
</dbReference>
<dbReference type="Gene3D" id="4.10.860.120">
    <property type="entry name" value="RNA polymerase II, clamp domain"/>
    <property type="match status" value="1"/>
</dbReference>
<dbReference type="Gene3D" id="1.10.274.100">
    <property type="entry name" value="RNA polymerase Rpb1, domain 3"/>
    <property type="match status" value="1"/>
</dbReference>
<dbReference type="HAMAP" id="MF_01322">
    <property type="entry name" value="RNApol_bact_RpoC"/>
    <property type="match status" value="1"/>
</dbReference>
<dbReference type="InterPro" id="IPR045867">
    <property type="entry name" value="DNA-dir_RpoC_beta_prime"/>
</dbReference>
<dbReference type="InterPro" id="IPR012754">
    <property type="entry name" value="DNA-dir_RpoC_beta_prime_bact"/>
</dbReference>
<dbReference type="InterPro" id="IPR000722">
    <property type="entry name" value="RNA_pol_asu"/>
</dbReference>
<dbReference type="InterPro" id="IPR006592">
    <property type="entry name" value="RNA_pol_N"/>
</dbReference>
<dbReference type="InterPro" id="IPR007080">
    <property type="entry name" value="RNA_pol_Rpb1_1"/>
</dbReference>
<dbReference type="InterPro" id="IPR007066">
    <property type="entry name" value="RNA_pol_Rpb1_3"/>
</dbReference>
<dbReference type="InterPro" id="IPR042102">
    <property type="entry name" value="RNA_pol_Rpb1_3_sf"/>
</dbReference>
<dbReference type="InterPro" id="IPR007083">
    <property type="entry name" value="RNA_pol_Rpb1_4"/>
</dbReference>
<dbReference type="InterPro" id="IPR007081">
    <property type="entry name" value="RNA_pol_Rpb1_5"/>
</dbReference>
<dbReference type="InterPro" id="IPR044893">
    <property type="entry name" value="RNA_pol_Rpb1_clamp_domain"/>
</dbReference>
<dbReference type="InterPro" id="IPR038120">
    <property type="entry name" value="Rpb1_funnel_sf"/>
</dbReference>
<dbReference type="NCBIfam" id="TIGR02386">
    <property type="entry name" value="rpoC_TIGR"/>
    <property type="match status" value="1"/>
</dbReference>
<dbReference type="PANTHER" id="PTHR19376">
    <property type="entry name" value="DNA-DIRECTED RNA POLYMERASE"/>
    <property type="match status" value="1"/>
</dbReference>
<dbReference type="PANTHER" id="PTHR19376:SF54">
    <property type="entry name" value="DNA-DIRECTED RNA POLYMERASE SUBUNIT BETA"/>
    <property type="match status" value="1"/>
</dbReference>
<dbReference type="Pfam" id="PF04997">
    <property type="entry name" value="RNA_pol_Rpb1_1"/>
    <property type="match status" value="1"/>
</dbReference>
<dbReference type="Pfam" id="PF00623">
    <property type="entry name" value="RNA_pol_Rpb1_2"/>
    <property type="match status" value="2"/>
</dbReference>
<dbReference type="Pfam" id="PF04983">
    <property type="entry name" value="RNA_pol_Rpb1_3"/>
    <property type="match status" value="1"/>
</dbReference>
<dbReference type="Pfam" id="PF05000">
    <property type="entry name" value="RNA_pol_Rpb1_4"/>
    <property type="match status" value="1"/>
</dbReference>
<dbReference type="Pfam" id="PF04998">
    <property type="entry name" value="RNA_pol_Rpb1_5"/>
    <property type="match status" value="1"/>
</dbReference>
<dbReference type="SMART" id="SM00663">
    <property type="entry name" value="RPOLA_N"/>
    <property type="match status" value="1"/>
</dbReference>
<dbReference type="SUPFAM" id="SSF64484">
    <property type="entry name" value="beta and beta-prime subunits of DNA dependent RNA-polymerase"/>
    <property type="match status" value="1"/>
</dbReference>
<comment type="function">
    <text evidence="1">DNA-dependent RNA polymerase catalyzes the transcription of DNA into RNA using the four ribonucleoside triphosphates as substrates.</text>
</comment>
<comment type="catalytic activity">
    <reaction evidence="1">
        <text>RNA(n) + a ribonucleoside 5'-triphosphate = RNA(n+1) + diphosphate</text>
        <dbReference type="Rhea" id="RHEA:21248"/>
        <dbReference type="Rhea" id="RHEA-COMP:14527"/>
        <dbReference type="Rhea" id="RHEA-COMP:17342"/>
        <dbReference type="ChEBI" id="CHEBI:33019"/>
        <dbReference type="ChEBI" id="CHEBI:61557"/>
        <dbReference type="ChEBI" id="CHEBI:140395"/>
        <dbReference type="EC" id="2.7.7.6"/>
    </reaction>
</comment>
<comment type="cofactor">
    <cofactor evidence="1">
        <name>Mg(2+)</name>
        <dbReference type="ChEBI" id="CHEBI:18420"/>
    </cofactor>
    <text evidence="1">Binds 1 Mg(2+) ion per subunit.</text>
</comment>
<comment type="cofactor">
    <cofactor evidence="1">
        <name>Zn(2+)</name>
        <dbReference type="ChEBI" id="CHEBI:29105"/>
    </cofactor>
    <text evidence="1">Binds 2 Zn(2+) ions per subunit.</text>
</comment>
<comment type="subunit">
    <text evidence="1">The RNAP catalytic core consists of 2 alpha, 1 beta, 1 beta' and 1 omega subunit. When a sigma factor is associated with the core the holoenzyme is formed, which can initiate transcription.</text>
</comment>
<comment type="similarity">
    <text evidence="1">Belongs to the RNA polymerase beta' chain family.</text>
</comment>